<accession>Q6PBK3</accession>
<reference key="1">
    <citation type="submission" date="2003-10" db="EMBL/GenBank/DDBJ databases">
        <authorList>
            <consortium name="NIH - Zebrafish Gene Collection (ZGC) project"/>
        </authorList>
    </citation>
    <scope>NUCLEOTIDE SEQUENCE [LARGE SCALE MRNA]</scope>
    <source>
        <tissue>Retina</tissue>
    </source>
</reference>
<evidence type="ECO:0000250" key="1">
    <source>
        <dbReference type="UniProtKB" id="P62857"/>
    </source>
</evidence>
<evidence type="ECO:0000250" key="2">
    <source>
        <dbReference type="UniProtKB" id="P62859"/>
    </source>
</evidence>
<evidence type="ECO:0000250" key="3">
    <source>
        <dbReference type="UniProtKB" id="Q6QAT1"/>
    </source>
</evidence>
<evidence type="ECO:0000305" key="4"/>
<dbReference type="EMBL" id="BC059677">
    <property type="protein sequence ID" value="AAH59677.1"/>
    <property type="molecule type" value="mRNA"/>
</dbReference>
<dbReference type="RefSeq" id="NP_998199.1">
    <property type="nucleotide sequence ID" value="NM_213034.3"/>
</dbReference>
<dbReference type="PDB" id="7OYA">
    <property type="method" value="EM"/>
    <property type="resolution" value="3.20 A"/>
    <property type="chains" value="c2=1-69"/>
</dbReference>
<dbReference type="PDB" id="7OYB">
    <property type="method" value="EM"/>
    <property type="resolution" value="2.40 A"/>
    <property type="chains" value="c2=1-69"/>
</dbReference>
<dbReference type="PDBsum" id="7OYA"/>
<dbReference type="PDBsum" id="7OYB"/>
<dbReference type="EMDB" id="EMD-13111"/>
<dbReference type="EMDB" id="EMD-13112"/>
<dbReference type="SMR" id="Q6PBK3"/>
<dbReference type="FunCoup" id="Q6PBK3">
    <property type="interactions" value="2170"/>
</dbReference>
<dbReference type="STRING" id="7955.ENSDARP00000115796"/>
<dbReference type="PaxDb" id="7955-ENSDARP00000115796"/>
<dbReference type="Ensembl" id="ENSDART00000052063">
    <property type="protein sequence ID" value="ENSDARP00000052062"/>
    <property type="gene ID" value="ENSDARG00000035860"/>
</dbReference>
<dbReference type="Ensembl" id="ENSDART00000133109">
    <property type="protein sequence ID" value="ENSDARP00000115796"/>
    <property type="gene ID" value="ENSDARG00000035860"/>
</dbReference>
<dbReference type="GeneID" id="406307"/>
<dbReference type="KEGG" id="dre:406307"/>
<dbReference type="AGR" id="ZFIN:ZDB-GENE-030131-2022"/>
<dbReference type="CTD" id="6234"/>
<dbReference type="ZFIN" id="ZDB-GENE-030131-2022">
    <property type="gene designation" value="rps28"/>
</dbReference>
<dbReference type="eggNOG" id="KOG3502">
    <property type="taxonomic scope" value="Eukaryota"/>
</dbReference>
<dbReference type="HOGENOM" id="CLU_178987_1_0_1"/>
<dbReference type="InParanoid" id="Q6PBK3"/>
<dbReference type="OMA" id="NTGMHGE"/>
<dbReference type="OrthoDB" id="10258930at2759"/>
<dbReference type="PhylomeDB" id="Q6PBK3"/>
<dbReference type="TreeFam" id="TF300136"/>
<dbReference type="Reactome" id="R-DRE-156827">
    <property type="pathway name" value="L13a-mediated translational silencing of Ceruloplasmin expression"/>
</dbReference>
<dbReference type="Reactome" id="R-DRE-1799339">
    <property type="pathway name" value="SRP-dependent cotranslational protein targeting to membrane"/>
</dbReference>
<dbReference type="Reactome" id="R-DRE-72689">
    <property type="pathway name" value="Formation of a pool of free 40S subunits"/>
</dbReference>
<dbReference type="Reactome" id="R-DRE-72695">
    <property type="pathway name" value="Formation of the ternary complex, and subsequently, the 43S complex"/>
</dbReference>
<dbReference type="Reactome" id="R-DRE-72702">
    <property type="pathway name" value="Ribosomal scanning and start codon recognition"/>
</dbReference>
<dbReference type="Reactome" id="R-DRE-975956">
    <property type="pathway name" value="Nonsense Mediated Decay (NMD) independent of the Exon Junction Complex (EJC)"/>
</dbReference>
<dbReference type="Reactome" id="R-DRE-975957">
    <property type="pathway name" value="Nonsense Mediated Decay (NMD) enhanced by the Exon Junction Complex (EJC)"/>
</dbReference>
<dbReference type="PRO" id="PR:Q6PBK3"/>
<dbReference type="Proteomes" id="UP000000437">
    <property type="component" value="Chromosome 2"/>
</dbReference>
<dbReference type="Bgee" id="ENSDARG00000035860">
    <property type="expression patterns" value="Expressed in tail and 23 other cell types or tissues"/>
</dbReference>
<dbReference type="ExpressionAtlas" id="Q6PBK3">
    <property type="expression patterns" value="baseline"/>
</dbReference>
<dbReference type="GO" id="GO:0098556">
    <property type="term" value="C:cytoplasmic side of rough endoplasmic reticulum membrane"/>
    <property type="evidence" value="ECO:0000250"/>
    <property type="project" value="UniProtKB"/>
</dbReference>
<dbReference type="GO" id="GO:0022627">
    <property type="term" value="C:cytosolic small ribosomal subunit"/>
    <property type="evidence" value="ECO:0000250"/>
    <property type="project" value="UniProtKB"/>
</dbReference>
<dbReference type="GO" id="GO:0005730">
    <property type="term" value="C:nucleolus"/>
    <property type="evidence" value="ECO:0007669"/>
    <property type="project" value="UniProtKB-SubCell"/>
</dbReference>
<dbReference type="GO" id="GO:0005840">
    <property type="term" value="C:ribosome"/>
    <property type="evidence" value="ECO:0000250"/>
    <property type="project" value="UniProtKB"/>
</dbReference>
<dbReference type="GO" id="GO:0032040">
    <property type="term" value="C:small-subunit processome"/>
    <property type="evidence" value="ECO:0000250"/>
    <property type="project" value="UniProtKB"/>
</dbReference>
<dbReference type="GO" id="GO:0003735">
    <property type="term" value="F:structural constituent of ribosome"/>
    <property type="evidence" value="ECO:0000318"/>
    <property type="project" value="GO_Central"/>
</dbReference>
<dbReference type="GO" id="GO:0002181">
    <property type="term" value="P:cytoplasmic translation"/>
    <property type="evidence" value="ECO:0000250"/>
    <property type="project" value="UniProtKB"/>
</dbReference>
<dbReference type="GO" id="GO:0030490">
    <property type="term" value="P:maturation of SSU-rRNA"/>
    <property type="evidence" value="ECO:0000318"/>
    <property type="project" value="GO_Central"/>
</dbReference>
<dbReference type="GO" id="GO:0000028">
    <property type="term" value="P:ribosomal small subunit assembly"/>
    <property type="evidence" value="ECO:0000318"/>
    <property type="project" value="GO_Central"/>
</dbReference>
<dbReference type="GO" id="GO:0042274">
    <property type="term" value="P:ribosomal small subunit biogenesis"/>
    <property type="evidence" value="ECO:0000250"/>
    <property type="project" value="UniProtKB"/>
</dbReference>
<dbReference type="CDD" id="cd04457">
    <property type="entry name" value="S1_S28E"/>
    <property type="match status" value="1"/>
</dbReference>
<dbReference type="FunFam" id="2.40.50.140:FF:000025">
    <property type="entry name" value="40S ribosomal protein S28"/>
    <property type="match status" value="1"/>
</dbReference>
<dbReference type="Gene3D" id="2.40.50.140">
    <property type="entry name" value="Nucleic acid-binding proteins"/>
    <property type="match status" value="1"/>
</dbReference>
<dbReference type="HAMAP" id="MF_00292">
    <property type="entry name" value="Ribosomal_eS28"/>
    <property type="match status" value="1"/>
</dbReference>
<dbReference type="InterPro" id="IPR012340">
    <property type="entry name" value="NA-bd_OB-fold"/>
</dbReference>
<dbReference type="InterPro" id="IPR000289">
    <property type="entry name" value="Ribosomal_eS28"/>
</dbReference>
<dbReference type="InterPro" id="IPR028626">
    <property type="entry name" value="Ribosomal_eS28_CS"/>
</dbReference>
<dbReference type="PANTHER" id="PTHR10769">
    <property type="entry name" value="40S RIBOSOMAL PROTEIN S28"/>
    <property type="match status" value="1"/>
</dbReference>
<dbReference type="PANTHER" id="PTHR10769:SF3">
    <property type="entry name" value="SMALL RIBOSOMAL SUBUNIT PROTEIN ES28"/>
    <property type="match status" value="1"/>
</dbReference>
<dbReference type="Pfam" id="PF01200">
    <property type="entry name" value="Ribosomal_S28e"/>
    <property type="match status" value="1"/>
</dbReference>
<dbReference type="SUPFAM" id="SSF50249">
    <property type="entry name" value="Nucleic acid-binding proteins"/>
    <property type="match status" value="1"/>
</dbReference>
<dbReference type="PROSITE" id="PS00961">
    <property type="entry name" value="RIBOSOMAL_S28E"/>
    <property type="match status" value="1"/>
</dbReference>
<protein>
    <recommendedName>
        <fullName evidence="4">Small ribosomal subunit protein eS28</fullName>
    </recommendedName>
    <alternativeName>
        <fullName>40S ribosomal protein S28</fullName>
    </alternativeName>
</protein>
<gene>
    <name type="primary">rps28</name>
    <name type="ORF">zgc:73367</name>
</gene>
<organism>
    <name type="scientific">Danio rerio</name>
    <name type="common">Zebrafish</name>
    <name type="synonym">Brachydanio rerio</name>
    <dbReference type="NCBI Taxonomy" id="7955"/>
    <lineage>
        <taxon>Eukaryota</taxon>
        <taxon>Metazoa</taxon>
        <taxon>Chordata</taxon>
        <taxon>Craniata</taxon>
        <taxon>Vertebrata</taxon>
        <taxon>Euteleostomi</taxon>
        <taxon>Actinopterygii</taxon>
        <taxon>Neopterygii</taxon>
        <taxon>Teleostei</taxon>
        <taxon>Ostariophysi</taxon>
        <taxon>Cypriniformes</taxon>
        <taxon>Danionidae</taxon>
        <taxon>Danioninae</taxon>
        <taxon>Danio</taxon>
    </lineage>
</organism>
<feature type="chain" id="PRO_0000136826" description="Small ribosomal subunit protein eS28">
    <location>
        <begin position="1"/>
        <end position="69"/>
    </location>
</feature>
<feature type="modified residue" description="N-acetylmethionine" evidence="2">
    <location>
        <position position="1"/>
    </location>
</feature>
<proteinExistence type="evidence at protein level"/>
<keyword id="KW-0002">3D-structure</keyword>
<keyword id="KW-0007">Acetylation</keyword>
<keyword id="KW-0963">Cytoplasm</keyword>
<keyword id="KW-0256">Endoplasmic reticulum</keyword>
<keyword id="KW-0539">Nucleus</keyword>
<keyword id="KW-1185">Reference proteome</keyword>
<keyword id="KW-0687">Ribonucleoprotein</keyword>
<keyword id="KW-0689">Ribosomal protein</keyword>
<sequence>MDASRVQPIKLARVTKVLGRTGSQGQCTQVRVEFMDDSNRSIIRNVKGPVREGDVLTLLESEREARRLR</sequence>
<name>RS28_DANRE</name>
<comment type="function">
    <text evidence="1">Component of the small ribosomal subunit. The ribosome is a large ribonucleoprotein complex responsible for the synthesis of proteins in the cell. Part of the small subunit (SSU) processome, first precursor of the small eukaryotic ribosomal subunit. During the assembly of the SSU processome in the nucleolus, many ribosome biogenesis factors, an RNA chaperone and ribosomal proteins associate with the nascent pre-rRNA and work in concert to generate RNA folding, modifications, rearrangements and cleavage as well as targeted degradation of pre-ribosomal RNA by the RNA exosome.</text>
</comment>
<comment type="subunit">
    <text evidence="1">Component of the 40S small ribosomal subunit. Part of the small subunit (SSU) processome, composed of more than 70 proteins and the RNA chaperone small nucleolar RNA (snoRNA) U3.</text>
</comment>
<comment type="subcellular location">
    <subcellularLocation>
        <location evidence="1">Cytoplasm</location>
        <location evidence="1">Cytosol</location>
    </subcellularLocation>
    <subcellularLocation>
        <location evidence="1">Cytoplasm</location>
    </subcellularLocation>
    <subcellularLocation>
        <location evidence="3">Rough endoplasmic reticulum</location>
    </subcellularLocation>
    <subcellularLocation>
        <location evidence="1">Nucleus</location>
        <location evidence="1">Nucleolus</location>
    </subcellularLocation>
    <text evidence="1 3">Detected on cytosolic polysomes (By similarity). Detected in ribosomes that are associated with the rough endoplasmic reticulum (By similarity).</text>
</comment>
<comment type="similarity">
    <text evidence="4">Belongs to the eukaryotic ribosomal protein eS28 family.</text>
</comment>